<protein>
    <recommendedName>
        <fullName>Globin CTT-IX</fullName>
    </recommendedName>
</protein>
<reference key="1">
    <citation type="journal article" date="1994" name="J. Mol. Evol.">
        <title>Intron-containing globin genes in the insect Chironomus thummi.</title>
        <authorList>
            <person name="Kao W.-Y."/>
            <person name="Trewitt P.M."/>
            <person name="Bergtrom G."/>
        </authorList>
    </citation>
    <scope>NUCLEOTIDE SEQUENCE [GENOMIC DNA]</scope>
</reference>
<reference key="2">
    <citation type="journal article" date="1981" name="Hoppe-Seyler's Z. Physiol. Chem.">
        <title>Hemoglobins, XXXVI. The primary structure of a dimeric insect hemoglobin (Erythrocruorin), component IX from Chironomus thummi thummi. Studies on the quarternary structure of the dimeric CTT-hemoglobins.</title>
        <authorList>
            <person name="Steer W."/>
            <person name="Braunitzer G."/>
        </authorList>
    </citation>
    <scope>PROTEIN SEQUENCE OF 17-161</scope>
</reference>
<organism>
    <name type="scientific">Chironomus thummi thummi</name>
    <name type="common">Midge</name>
    <dbReference type="NCBI Taxonomy" id="7155"/>
    <lineage>
        <taxon>Eukaryota</taxon>
        <taxon>Metazoa</taxon>
        <taxon>Ecdysozoa</taxon>
        <taxon>Arthropoda</taxon>
        <taxon>Hexapoda</taxon>
        <taxon>Insecta</taxon>
        <taxon>Pterygota</taxon>
        <taxon>Neoptera</taxon>
        <taxon>Endopterygota</taxon>
        <taxon>Diptera</taxon>
        <taxon>Nematocera</taxon>
        <taxon>Chironomoidea</taxon>
        <taxon>Chironomidae</taxon>
        <taxon>Chironominae</taxon>
        <taxon>Chironomus</taxon>
    </lineage>
</organism>
<comment type="subunit">
    <text>Homodimer.</text>
</comment>
<comment type="miscellaneous">
    <text>There are at least 12 different components in Midge globin.</text>
</comment>
<comment type="similarity">
    <text evidence="1">Belongs to the globin family.</text>
</comment>
<gene>
    <name type="primary">CTT-9</name>
</gene>
<dbReference type="EMBL" id="AF001292">
    <property type="protein sequence ID" value="AAB58931.1"/>
    <property type="molecule type" value="Genomic_DNA"/>
</dbReference>
<dbReference type="SMR" id="P02223"/>
<dbReference type="Allergome" id="207">
    <property type="allergen name" value="Chi t 3"/>
</dbReference>
<dbReference type="Allergome" id="211">
    <property type="allergen name" value="Chi t 3.0401"/>
</dbReference>
<dbReference type="GO" id="GO:0005576">
    <property type="term" value="C:extracellular region"/>
    <property type="evidence" value="ECO:0007669"/>
    <property type="project" value="InterPro"/>
</dbReference>
<dbReference type="GO" id="GO:0005833">
    <property type="term" value="C:hemoglobin complex"/>
    <property type="evidence" value="ECO:0007669"/>
    <property type="project" value="InterPro"/>
</dbReference>
<dbReference type="GO" id="GO:0020037">
    <property type="term" value="F:heme binding"/>
    <property type="evidence" value="ECO:0007669"/>
    <property type="project" value="InterPro"/>
</dbReference>
<dbReference type="GO" id="GO:0046872">
    <property type="term" value="F:metal ion binding"/>
    <property type="evidence" value="ECO:0007669"/>
    <property type="project" value="UniProtKB-KW"/>
</dbReference>
<dbReference type="GO" id="GO:0019825">
    <property type="term" value="F:oxygen binding"/>
    <property type="evidence" value="ECO:0007669"/>
    <property type="project" value="InterPro"/>
</dbReference>
<dbReference type="GO" id="GO:0005344">
    <property type="term" value="F:oxygen carrier activity"/>
    <property type="evidence" value="ECO:0007669"/>
    <property type="project" value="UniProtKB-KW"/>
</dbReference>
<dbReference type="CDD" id="cd01040">
    <property type="entry name" value="Mb-like"/>
    <property type="match status" value="1"/>
</dbReference>
<dbReference type="Gene3D" id="1.10.490.10">
    <property type="entry name" value="Globins"/>
    <property type="match status" value="1"/>
</dbReference>
<dbReference type="InterPro" id="IPR002336">
    <property type="entry name" value="Erythrocruorin"/>
</dbReference>
<dbReference type="InterPro" id="IPR000971">
    <property type="entry name" value="Globin"/>
</dbReference>
<dbReference type="InterPro" id="IPR009050">
    <property type="entry name" value="Globin-like_sf"/>
</dbReference>
<dbReference type="InterPro" id="IPR012292">
    <property type="entry name" value="Globin/Proto"/>
</dbReference>
<dbReference type="InterPro" id="IPR044399">
    <property type="entry name" value="Mb-like_M"/>
</dbReference>
<dbReference type="PANTHER" id="PTHR47217">
    <property type="entry name" value="GLOBIN-LIKE PROTEIN"/>
    <property type="match status" value="1"/>
</dbReference>
<dbReference type="PANTHER" id="PTHR47217:SF1">
    <property type="entry name" value="GLOBIN-LIKE PROTEIN"/>
    <property type="match status" value="1"/>
</dbReference>
<dbReference type="Pfam" id="PF00042">
    <property type="entry name" value="Globin"/>
    <property type="match status" value="1"/>
</dbReference>
<dbReference type="PRINTS" id="PR00611">
    <property type="entry name" value="ERYTHCRUORIN"/>
</dbReference>
<dbReference type="SUPFAM" id="SSF46458">
    <property type="entry name" value="Globin-like"/>
    <property type="match status" value="1"/>
</dbReference>
<dbReference type="PROSITE" id="PS01033">
    <property type="entry name" value="GLOBIN"/>
    <property type="match status" value="1"/>
</dbReference>
<feature type="signal peptide" evidence="2">
    <location>
        <begin position="1"/>
        <end position="16"/>
    </location>
</feature>
<feature type="chain" id="PRO_0000011205" description="Globin CTT-IX">
    <location>
        <begin position="17"/>
        <end position="161"/>
    </location>
</feature>
<feature type="domain" description="Globin" evidence="1">
    <location>
        <begin position="18"/>
        <end position="161"/>
    </location>
</feature>
<feature type="binding site" description="distal binding residue" evidence="1">
    <location>
        <position position="76"/>
    </location>
    <ligand>
        <name>heme b</name>
        <dbReference type="ChEBI" id="CHEBI:60344"/>
    </ligand>
    <ligandPart>
        <name>Fe</name>
        <dbReference type="ChEBI" id="CHEBI:18248"/>
    </ligandPart>
</feature>
<feature type="binding site" description="proximal binding residue" evidence="1">
    <location>
        <position position="111"/>
    </location>
    <ligand>
        <name>heme b</name>
        <dbReference type="ChEBI" id="CHEBI:60344"/>
    </ligand>
    <ligandPart>
        <name>Fe</name>
        <dbReference type="ChEBI" id="CHEBI:18248"/>
    </ligandPart>
</feature>
<feature type="sequence conflict" description="In Ref. 2; AA sequence." evidence="3" ref="2">
    <original>Q</original>
    <variation>E</variation>
    <location>
        <position position="23"/>
    </location>
</feature>
<evidence type="ECO:0000255" key="1">
    <source>
        <dbReference type="PROSITE-ProRule" id="PRU00238"/>
    </source>
</evidence>
<evidence type="ECO:0000269" key="2">
    <source>
    </source>
</evidence>
<evidence type="ECO:0000305" key="3"/>
<accession>P02223</accession>
<keyword id="KW-0903">Direct protein sequencing</keyword>
<keyword id="KW-0349">Heme</keyword>
<keyword id="KW-0408">Iron</keyword>
<keyword id="KW-0479">Metal-binding</keyword>
<keyword id="KW-0561">Oxygen transport</keyword>
<keyword id="KW-0732">Signal</keyword>
<keyword id="KW-0813">Transport</keyword>
<name>GLB9_CHITH</name>
<sequence length="161" mass="17266">MKFFIVLALCIVGAIADPVSSDQANAIRASWAGVKHNEVDILAAVFSDHPDIQARFPQFAGKDLASIKDTGAFATHAGRIVGFISEIVALVGNESNAPAMATLINELSTSHHNRGITKGQFNEFRSSLVSYLSSHASWNDATADAWTHGLDNIFGMIFAHL</sequence>
<proteinExistence type="evidence at protein level"/>